<organism>
    <name type="scientific">Mus musculus</name>
    <name type="common">Mouse</name>
    <dbReference type="NCBI Taxonomy" id="10090"/>
    <lineage>
        <taxon>Eukaryota</taxon>
        <taxon>Metazoa</taxon>
        <taxon>Chordata</taxon>
        <taxon>Craniata</taxon>
        <taxon>Vertebrata</taxon>
        <taxon>Euteleostomi</taxon>
        <taxon>Mammalia</taxon>
        <taxon>Eutheria</taxon>
        <taxon>Euarchontoglires</taxon>
        <taxon>Glires</taxon>
        <taxon>Rodentia</taxon>
        <taxon>Myomorpha</taxon>
        <taxon>Muroidea</taxon>
        <taxon>Muridae</taxon>
        <taxon>Murinae</taxon>
        <taxon>Mus</taxon>
        <taxon>Mus</taxon>
    </lineage>
</organism>
<comment type="tissue specificity">
    <text evidence="4">Widely expressed.</text>
</comment>
<comment type="developmental stage">
    <text evidence="4">Expressed at 14.5 dpc.</text>
</comment>
<comment type="miscellaneous">
    <text evidence="4 5">RTL6 is one of at least 11 genes called Mar or Mart related to long terminal repeat retrotransposons. They do not correspond to functional retrotransposons, but rather to neofunctionalized retrotransposons genes.</text>
</comment>
<comment type="similarity">
    <text evidence="7">Belongs to the LDOC1 family.</text>
</comment>
<comment type="sequence caution" evidence="7">
    <conflict type="frameshift">
        <sequence resource="EMBL-CDS" id="BAC39047"/>
    </conflict>
</comment>
<evidence type="ECO:0000250" key="1">
    <source>
        <dbReference type="UniProtKB" id="Q6ICC9"/>
    </source>
</evidence>
<evidence type="ECO:0000255" key="2"/>
<evidence type="ECO:0000256" key="3">
    <source>
        <dbReference type="SAM" id="MobiDB-lite"/>
    </source>
</evidence>
<evidence type="ECO:0000269" key="4">
    <source>
    </source>
</evidence>
<evidence type="ECO:0000269" key="5">
    <source>
    </source>
</evidence>
<evidence type="ECO:0000303" key="6">
    <source>
    </source>
</evidence>
<evidence type="ECO:0000305" key="7"/>
<feature type="chain" id="PRO_0000289098" description="Retrotransposon Gag-like protein 6">
    <location>
        <begin position="1"/>
        <end position="243"/>
    </location>
</feature>
<feature type="region of interest" description="Disordered" evidence="3">
    <location>
        <begin position="1"/>
        <end position="22"/>
    </location>
</feature>
<feature type="region of interest" description="Disordered" evidence="3">
    <location>
        <begin position="84"/>
        <end position="105"/>
    </location>
</feature>
<feature type="region of interest" description="Disordered" evidence="3">
    <location>
        <begin position="218"/>
        <end position="243"/>
    </location>
</feature>
<feature type="coiled-coil region" evidence="2">
    <location>
        <begin position="29"/>
        <end position="69"/>
    </location>
</feature>
<feature type="compositionally biased region" description="Polar residues" evidence="3">
    <location>
        <begin position="1"/>
        <end position="12"/>
    </location>
</feature>
<feature type="compositionally biased region" description="Polar residues" evidence="3">
    <location>
        <begin position="85"/>
        <end position="94"/>
    </location>
</feature>
<name>RTL6_MOUSE</name>
<gene>
    <name evidence="1" type="primary">Rtl6</name>
    <name evidence="7" type="synonym">Ldoc1l</name>
    <name type="synonym">Mar6</name>
    <name evidence="6" type="synonym">Mart6</name>
    <name type="synonym">Sushi-15E3</name>
</gene>
<proteinExistence type="evidence at transcript level"/>
<protein>
    <recommendedName>
        <fullName evidence="1">Retrotransposon Gag-like protein 6</fullName>
    </recommendedName>
    <alternativeName>
        <fullName evidence="6">Mammalian retrotransposon-derived protein 6</fullName>
    </alternativeName>
    <alternativeName>
        <fullName evidence="7">Protein LDOC1L</fullName>
    </alternativeName>
    <alternativeName>
        <fullName>Protein Sushi-15E3</fullName>
    </alternativeName>
</protein>
<reference key="1">
    <citation type="journal article" date="2005" name="Science">
        <title>The transcriptional landscape of the mammalian genome.</title>
        <authorList>
            <person name="Carninci P."/>
            <person name="Kasukawa T."/>
            <person name="Katayama S."/>
            <person name="Gough J."/>
            <person name="Frith M.C."/>
            <person name="Maeda N."/>
            <person name="Oyama R."/>
            <person name="Ravasi T."/>
            <person name="Lenhard B."/>
            <person name="Wells C."/>
            <person name="Kodzius R."/>
            <person name="Shimokawa K."/>
            <person name="Bajic V.B."/>
            <person name="Brenner S.E."/>
            <person name="Batalov S."/>
            <person name="Forrest A.R."/>
            <person name="Zavolan M."/>
            <person name="Davis M.J."/>
            <person name="Wilming L.G."/>
            <person name="Aidinis V."/>
            <person name="Allen J.E."/>
            <person name="Ambesi-Impiombato A."/>
            <person name="Apweiler R."/>
            <person name="Aturaliya R.N."/>
            <person name="Bailey T.L."/>
            <person name="Bansal M."/>
            <person name="Baxter L."/>
            <person name="Beisel K.W."/>
            <person name="Bersano T."/>
            <person name="Bono H."/>
            <person name="Chalk A.M."/>
            <person name="Chiu K.P."/>
            <person name="Choudhary V."/>
            <person name="Christoffels A."/>
            <person name="Clutterbuck D.R."/>
            <person name="Crowe M.L."/>
            <person name="Dalla E."/>
            <person name="Dalrymple B.P."/>
            <person name="de Bono B."/>
            <person name="Della Gatta G."/>
            <person name="di Bernardo D."/>
            <person name="Down T."/>
            <person name="Engstrom P."/>
            <person name="Fagiolini M."/>
            <person name="Faulkner G."/>
            <person name="Fletcher C.F."/>
            <person name="Fukushima T."/>
            <person name="Furuno M."/>
            <person name="Futaki S."/>
            <person name="Gariboldi M."/>
            <person name="Georgii-Hemming P."/>
            <person name="Gingeras T.R."/>
            <person name="Gojobori T."/>
            <person name="Green R.E."/>
            <person name="Gustincich S."/>
            <person name="Harbers M."/>
            <person name="Hayashi Y."/>
            <person name="Hensch T.K."/>
            <person name="Hirokawa N."/>
            <person name="Hill D."/>
            <person name="Huminiecki L."/>
            <person name="Iacono M."/>
            <person name="Ikeo K."/>
            <person name="Iwama A."/>
            <person name="Ishikawa T."/>
            <person name="Jakt M."/>
            <person name="Kanapin A."/>
            <person name="Katoh M."/>
            <person name="Kawasawa Y."/>
            <person name="Kelso J."/>
            <person name="Kitamura H."/>
            <person name="Kitano H."/>
            <person name="Kollias G."/>
            <person name="Krishnan S.P."/>
            <person name="Kruger A."/>
            <person name="Kummerfeld S.K."/>
            <person name="Kurochkin I.V."/>
            <person name="Lareau L.F."/>
            <person name="Lazarevic D."/>
            <person name="Lipovich L."/>
            <person name="Liu J."/>
            <person name="Liuni S."/>
            <person name="McWilliam S."/>
            <person name="Madan Babu M."/>
            <person name="Madera M."/>
            <person name="Marchionni L."/>
            <person name="Matsuda H."/>
            <person name="Matsuzawa S."/>
            <person name="Miki H."/>
            <person name="Mignone F."/>
            <person name="Miyake S."/>
            <person name="Morris K."/>
            <person name="Mottagui-Tabar S."/>
            <person name="Mulder N."/>
            <person name="Nakano N."/>
            <person name="Nakauchi H."/>
            <person name="Ng P."/>
            <person name="Nilsson R."/>
            <person name="Nishiguchi S."/>
            <person name="Nishikawa S."/>
            <person name="Nori F."/>
            <person name="Ohara O."/>
            <person name="Okazaki Y."/>
            <person name="Orlando V."/>
            <person name="Pang K.C."/>
            <person name="Pavan W.J."/>
            <person name="Pavesi G."/>
            <person name="Pesole G."/>
            <person name="Petrovsky N."/>
            <person name="Piazza S."/>
            <person name="Reed J."/>
            <person name="Reid J.F."/>
            <person name="Ring B.Z."/>
            <person name="Ringwald M."/>
            <person name="Rost B."/>
            <person name="Ruan Y."/>
            <person name="Salzberg S.L."/>
            <person name="Sandelin A."/>
            <person name="Schneider C."/>
            <person name="Schoenbach C."/>
            <person name="Sekiguchi K."/>
            <person name="Semple C.A."/>
            <person name="Seno S."/>
            <person name="Sessa L."/>
            <person name="Sheng Y."/>
            <person name="Shibata Y."/>
            <person name="Shimada H."/>
            <person name="Shimada K."/>
            <person name="Silva D."/>
            <person name="Sinclair B."/>
            <person name="Sperling S."/>
            <person name="Stupka E."/>
            <person name="Sugiura K."/>
            <person name="Sultana R."/>
            <person name="Takenaka Y."/>
            <person name="Taki K."/>
            <person name="Tammoja K."/>
            <person name="Tan S.L."/>
            <person name="Tang S."/>
            <person name="Taylor M.S."/>
            <person name="Tegner J."/>
            <person name="Teichmann S.A."/>
            <person name="Ueda H.R."/>
            <person name="van Nimwegen E."/>
            <person name="Verardo R."/>
            <person name="Wei C.L."/>
            <person name="Yagi K."/>
            <person name="Yamanishi H."/>
            <person name="Zabarovsky E."/>
            <person name="Zhu S."/>
            <person name="Zimmer A."/>
            <person name="Hide W."/>
            <person name="Bult C."/>
            <person name="Grimmond S.M."/>
            <person name="Teasdale R.D."/>
            <person name="Liu E.T."/>
            <person name="Brusic V."/>
            <person name="Quackenbush J."/>
            <person name="Wahlestedt C."/>
            <person name="Mattick J.S."/>
            <person name="Hume D.A."/>
            <person name="Kai C."/>
            <person name="Sasaki D."/>
            <person name="Tomaru Y."/>
            <person name="Fukuda S."/>
            <person name="Kanamori-Katayama M."/>
            <person name="Suzuki M."/>
            <person name="Aoki J."/>
            <person name="Arakawa T."/>
            <person name="Iida J."/>
            <person name="Imamura K."/>
            <person name="Itoh M."/>
            <person name="Kato T."/>
            <person name="Kawaji H."/>
            <person name="Kawagashira N."/>
            <person name="Kawashima T."/>
            <person name="Kojima M."/>
            <person name="Kondo S."/>
            <person name="Konno H."/>
            <person name="Nakano K."/>
            <person name="Ninomiya N."/>
            <person name="Nishio T."/>
            <person name="Okada M."/>
            <person name="Plessy C."/>
            <person name="Shibata K."/>
            <person name="Shiraki T."/>
            <person name="Suzuki S."/>
            <person name="Tagami M."/>
            <person name="Waki K."/>
            <person name="Watahiki A."/>
            <person name="Okamura-Oho Y."/>
            <person name="Suzuki H."/>
            <person name="Kawai J."/>
            <person name="Hayashizaki Y."/>
        </authorList>
    </citation>
    <scope>NUCLEOTIDE SEQUENCE [LARGE SCALE MRNA]</scope>
    <source>
        <strain>C57BL/6J</strain>
        <tissue>Spinal ganglion</tissue>
    </source>
</reference>
<reference key="2">
    <citation type="journal article" date="2004" name="Genome Res.">
        <title>The status, quality, and expansion of the NIH full-length cDNA project: the Mammalian Gene Collection (MGC).</title>
        <authorList>
            <consortium name="The MGC Project Team"/>
        </authorList>
    </citation>
    <scope>NUCLEOTIDE SEQUENCE [LARGE SCALE MRNA]</scope>
    <source>
        <strain>C57BL/6J</strain>
        <tissue>Brain</tissue>
    </source>
</reference>
<reference key="3">
    <citation type="journal article" date="2005" name="Cytogenet. Genome Res.">
        <title>A family of neofunctionalized Ty3/gypsy retrotransposon genes in mammalian genomes.</title>
        <authorList>
            <person name="Brandt J."/>
            <person name="Veith A.-M."/>
            <person name="Volff J.-N."/>
        </authorList>
    </citation>
    <scope>GENE FAMILY</scope>
</reference>
<reference key="4">
    <citation type="journal article" date="2005" name="J. Mol. Evol.">
        <title>A small family of sushi-class retrotransposon-derived genes in mammals and their relation to genomic imprinting.</title>
        <authorList>
            <person name="Youngson N.A."/>
            <person name="Kocialkowski S."/>
            <person name="Peel N."/>
            <person name="Ferguson-Smith A.C."/>
        </authorList>
    </citation>
    <scope>IDENTIFICATION</scope>
</reference>
<reference key="5">
    <citation type="journal article" date="2005" name="Gene">
        <title>Transposable elements as a source of genetic innovation: expression and evolution of a family of retrotransposon-derived neogenes in mammals.</title>
        <authorList>
            <person name="Brandt J."/>
            <person name="Schrauth S."/>
            <person name="Veith A.-M."/>
            <person name="Froschauer A."/>
            <person name="Haneke T."/>
            <person name="Schultheis C."/>
            <person name="Gessler M."/>
            <person name="Leimeister C."/>
            <person name="Volff J.-N."/>
        </authorList>
    </citation>
    <scope>TISSUE SPECIFICITY</scope>
    <scope>DEVELOPMENTAL STAGE</scope>
</reference>
<keyword id="KW-0175">Coiled coil</keyword>
<keyword id="KW-1185">Reference proteome</keyword>
<accession>Q505G4</accession>
<accession>Q8BNE4</accession>
<dbReference type="EMBL" id="AK083881">
    <property type="protein sequence ID" value="BAC39047.1"/>
    <property type="status" value="ALT_SEQ"/>
    <property type="molecule type" value="mRNA"/>
</dbReference>
<dbReference type="EMBL" id="BC058638">
    <property type="protein sequence ID" value="AAH58638.2"/>
    <property type="molecule type" value="mRNA"/>
</dbReference>
<dbReference type="EMBL" id="BC094559">
    <property type="protein sequence ID" value="AAH94559.1"/>
    <property type="molecule type" value="mRNA"/>
</dbReference>
<dbReference type="EMBL" id="BN000778">
    <property type="protein sequence ID" value="CAI99158.1"/>
    <property type="status" value="ALT_SEQ"/>
    <property type="molecule type" value="Genomic_DNA"/>
</dbReference>
<dbReference type="CCDS" id="CCDS37168.1"/>
<dbReference type="RefSeq" id="NP_808298.2">
    <property type="nucleotide sequence ID" value="NM_177630.4"/>
</dbReference>
<dbReference type="FunCoup" id="Q505G4">
    <property type="interactions" value="20"/>
</dbReference>
<dbReference type="STRING" id="10090.ENSMUSP00000069947"/>
<dbReference type="GlyGen" id="Q505G4">
    <property type="glycosylation" value="1 site"/>
</dbReference>
<dbReference type="iPTMnet" id="Q505G4"/>
<dbReference type="PhosphoSitePlus" id="Q505G4"/>
<dbReference type="PaxDb" id="10090-ENSMUSP00000069947"/>
<dbReference type="ProteomicsDB" id="256800"/>
<dbReference type="Antibodypedia" id="333">
    <property type="antibodies" value="108 antibodies from 24 providers"/>
</dbReference>
<dbReference type="DNASU" id="223732"/>
<dbReference type="Ensembl" id="ENSMUST00000069476.5">
    <property type="protein sequence ID" value="ENSMUSP00000069947.5"/>
    <property type="gene ID" value="ENSMUSG00000055745.5"/>
</dbReference>
<dbReference type="GeneID" id="223732"/>
<dbReference type="KEGG" id="mmu:223732"/>
<dbReference type="UCSC" id="uc007xcc.1">
    <property type="organism name" value="mouse"/>
</dbReference>
<dbReference type="AGR" id="MGI:2675858"/>
<dbReference type="CTD" id="84247"/>
<dbReference type="MGI" id="MGI:2675858">
    <property type="gene designation" value="Rtl6"/>
</dbReference>
<dbReference type="VEuPathDB" id="HostDB:ENSMUSG00000055745"/>
<dbReference type="eggNOG" id="ENOG502R33E">
    <property type="taxonomic scope" value="Eukaryota"/>
</dbReference>
<dbReference type="GeneTree" id="ENSGT00940000162853"/>
<dbReference type="HOGENOM" id="CLU_101832_0_0_1"/>
<dbReference type="InParanoid" id="Q505G4"/>
<dbReference type="OMA" id="TCASNRA"/>
<dbReference type="OrthoDB" id="9660564at2759"/>
<dbReference type="PhylomeDB" id="Q505G4"/>
<dbReference type="TreeFam" id="TF337113"/>
<dbReference type="BioGRID-ORCS" id="223732">
    <property type="hits" value="1 hit in 76 CRISPR screens"/>
</dbReference>
<dbReference type="PRO" id="PR:Q505G4"/>
<dbReference type="Proteomes" id="UP000000589">
    <property type="component" value="Chromosome 15"/>
</dbReference>
<dbReference type="RNAct" id="Q505G4">
    <property type="molecule type" value="protein"/>
</dbReference>
<dbReference type="Bgee" id="ENSMUSG00000055745">
    <property type="expression patterns" value="Expressed in saccule of membranous labyrinth and 250 other cell types or tissues"/>
</dbReference>
<dbReference type="InterPro" id="IPR032549">
    <property type="entry name" value="DUF4939"/>
</dbReference>
<dbReference type="Pfam" id="PF16297">
    <property type="entry name" value="DUF4939"/>
    <property type="match status" value="1"/>
</dbReference>
<sequence length="243" mass="26660">MVQPRTSKTESPASAPGASAQMDDVVDTLTSLRLTNSALRREASTLRAEKANLTNMLESVMAELTLLRTRARIPGALQITPPISAITSNGTRPMTTPPTSLPEPFSGDPGQLAGFLMQMDRFMIFQASRFPGEAERVAFLVSRLTGEAEKWAIPHMQPDSPLRNNYQGFLAELRRTYKSPLRHSRRAQIRKTSASNRAVRERERERQMLCRQLAAAGTGSCPVHPASNGTNPAPALPSRGRNL</sequence>